<reference key="1">
    <citation type="journal article" date="2005" name="Nature">
        <title>Virology: independent virus development outside a host.</title>
        <authorList>
            <person name="Haring M."/>
            <person name="Vestergaard G."/>
            <person name="Rachel R."/>
            <person name="Chen L."/>
            <person name="Garrett R.A."/>
            <person name="Prangishvili D."/>
        </authorList>
    </citation>
    <scope>NUCLEOTIDE SEQUENCE [GENOMIC DNA]</scope>
</reference>
<keyword id="KW-1185">Reference proteome</keyword>
<accession>Q3V4R1</accession>
<organism>
    <name type="scientific">Acidianus two-tailed virus</name>
    <name type="common">ATV</name>
    <dbReference type="NCBI Taxonomy" id="315953"/>
    <lineage>
        <taxon>Viruses</taxon>
        <taxon>Viruses incertae sedis</taxon>
        <taxon>Bicaudaviridae</taxon>
        <taxon>Bicaudavirus</taxon>
    </lineage>
</organism>
<feature type="chain" id="PRO_0000389096" description="Uncharacterized protein ORF34">
    <location>
        <begin position="1"/>
        <end position="34"/>
    </location>
</feature>
<dbReference type="EMBL" id="AJ888457">
    <property type="protein sequence ID" value="CAI59903.1"/>
    <property type="molecule type" value="Genomic_DNA"/>
</dbReference>
<dbReference type="RefSeq" id="YP_319885.1">
    <property type="nucleotide sequence ID" value="NC_007409.1"/>
</dbReference>
<dbReference type="GeneID" id="4484259"/>
<dbReference type="KEGG" id="vg:4484259"/>
<dbReference type="Proteomes" id="UP000002150">
    <property type="component" value="Genome"/>
</dbReference>
<proteinExistence type="predicted"/>
<organismHost>
    <name type="scientific">Acidianus convivator</name>
    <dbReference type="NCBI Taxonomy" id="269667"/>
</organismHost>
<sequence length="34" mass="3606">MLQVRASPTWGGGTYKKAVLVSLCRYSTAVGAPH</sequence>
<protein>
    <recommendedName>
        <fullName>Uncharacterized protein ORF34</fullName>
    </recommendedName>
</protein>
<name>Y034_ATV</name>